<proteinExistence type="predicted"/>
<dbReference type="EMBL" id="AL137082">
    <property type="protein sequence ID" value="CAB68182.1"/>
    <property type="status" value="ALT_SEQ"/>
    <property type="molecule type" value="Genomic_DNA"/>
</dbReference>
<dbReference type="EMBL" id="CP002686">
    <property type="protein sequence ID" value="AEE79781.1"/>
    <property type="status" value="ALT_SEQ"/>
    <property type="molecule type" value="Genomic_DNA"/>
</dbReference>
<dbReference type="PIR" id="T45664">
    <property type="entry name" value="T45664"/>
</dbReference>
<dbReference type="RefSeq" id="NP_191403.1">
    <property type="nucleotide sequence ID" value="NM_115706.1"/>
</dbReference>
<dbReference type="SMR" id="Q9M2H2"/>
<dbReference type="FunCoup" id="Q9M2H2">
    <property type="interactions" value="41"/>
</dbReference>
<dbReference type="GeneID" id="825013"/>
<dbReference type="KEGG" id="ath:AT3G58440"/>
<dbReference type="Araport" id="AT3G58440"/>
<dbReference type="TAIR" id="AT3G58440"/>
<dbReference type="eggNOG" id="KOG1987">
    <property type="taxonomic scope" value="Eukaryota"/>
</dbReference>
<dbReference type="HOGENOM" id="CLU_026537_3_1_1"/>
<dbReference type="InParanoid" id="Q9M2H2"/>
<dbReference type="PRO" id="PR:Q9M2H2"/>
<dbReference type="Proteomes" id="UP000006548">
    <property type="component" value="Chromosome 3"/>
</dbReference>
<dbReference type="ExpressionAtlas" id="Q9M2H2">
    <property type="expression patterns" value="differential"/>
</dbReference>
<dbReference type="CDD" id="cd00121">
    <property type="entry name" value="MATH"/>
    <property type="match status" value="1"/>
</dbReference>
<dbReference type="Gene3D" id="2.60.210.10">
    <property type="entry name" value="Apoptosis, Tumor Necrosis Factor Receptor Associated Protein 2, Chain A"/>
    <property type="match status" value="1"/>
</dbReference>
<dbReference type="InterPro" id="IPR050804">
    <property type="entry name" value="MATH-CC_domain_protein"/>
</dbReference>
<dbReference type="InterPro" id="IPR002083">
    <property type="entry name" value="MATH/TRAF_dom"/>
</dbReference>
<dbReference type="InterPro" id="IPR008974">
    <property type="entry name" value="TRAF-like"/>
</dbReference>
<dbReference type="PANTHER" id="PTHR46236:SF33">
    <property type="entry name" value="MEPRIN AND TRAF-LIKE DOMAIN-CONTAINING PROTEIN-RELATED"/>
    <property type="match status" value="1"/>
</dbReference>
<dbReference type="PANTHER" id="PTHR46236">
    <property type="entry name" value="TRAF-LIKE SUPERFAMILY PROTEIN"/>
    <property type="match status" value="1"/>
</dbReference>
<dbReference type="Pfam" id="PF22486">
    <property type="entry name" value="MATH_2"/>
    <property type="match status" value="1"/>
</dbReference>
<dbReference type="SMART" id="SM00061">
    <property type="entry name" value="MATH"/>
    <property type="match status" value="1"/>
</dbReference>
<dbReference type="SUPFAM" id="SSF49599">
    <property type="entry name" value="TRAF domain-like"/>
    <property type="match status" value="1"/>
</dbReference>
<dbReference type="PROSITE" id="PS50144">
    <property type="entry name" value="MATH"/>
    <property type="match status" value="1"/>
</dbReference>
<reference key="1">
    <citation type="journal article" date="2000" name="Nature">
        <title>Sequence and analysis of chromosome 3 of the plant Arabidopsis thaliana.</title>
        <authorList>
            <person name="Salanoubat M."/>
            <person name="Lemcke K."/>
            <person name="Rieger M."/>
            <person name="Ansorge W."/>
            <person name="Unseld M."/>
            <person name="Fartmann B."/>
            <person name="Valle G."/>
            <person name="Bloecker H."/>
            <person name="Perez-Alonso M."/>
            <person name="Obermaier B."/>
            <person name="Delseny M."/>
            <person name="Boutry M."/>
            <person name="Grivell L.A."/>
            <person name="Mache R."/>
            <person name="Puigdomenech P."/>
            <person name="De Simone V."/>
            <person name="Choisne N."/>
            <person name="Artiguenave F."/>
            <person name="Robert C."/>
            <person name="Brottier P."/>
            <person name="Wincker P."/>
            <person name="Cattolico L."/>
            <person name="Weissenbach J."/>
            <person name="Saurin W."/>
            <person name="Quetier F."/>
            <person name="Schaefer M."/>
            <person name="Mueller-Auer S."/>
            <person name="Gabel C."/>
            <person name="Fuchs M."/>
            <person name="Benes V."/>
            <person name="Wurmbach E."/>
            <person name="Drzonek H."/>
            <person name="Erfle H."/>
            <person name="Jordan N."/>
            <person name="Bangert S."/>
            <person name="Wiedelmann R."/>
            <person name="Kranz H."/>
            <person name="Voss H."/>
            <person name="Holland R."/>
            <person name="Brandt P."/>
            <person name="Nyakatura G."/>
            <person name="Vezzi A."/>
            <person name="D'Angelo M."/>
            <person name="Pallavicini A."/>
            <person name="Toppo S."/>
            <person name="Simionati B."/>
            <person name="Conrad A."/>
            <person name="Hornischer K."/>
            <person name="Kauer G."/>
            <person name="Loehnert T.-H."/>
            <person name="Nordsiek G."/>
            <person name="Reichelt J."/>
            <person name="Scharfe M."/>
            <person name="Schoen O."/>
            <person name="Bargues M."/>
            <person name="Terol J."/>
            <person name="Climent J."/>
            <person name="Navarro P."/>
            <person name="Collado C."/>
            <person name="Perez-Perez A."/>
            <person name="Ottenwaelder B."/>
            <person name="Duchemin D."/>
            <person name="Cooke R."/>
            <person name="Laudie M."/>
            <person name="Berger-Llauro C."/>
            <person name="Purnelle B."/>
            <person name="Masuy D."/>
            <person name="de Haan M."/>
            <person name="Maarse A.C."/>
            <person name="Alcaraz J.-P."/>
            <person name="Cottet A."/>
            <person name="Casacuberta E."/>
            <person name="Monfort A."/>
            <person name="Argiriou A."/>
            <person name="Flores M."/>
            <person name="Liguori R."/>
            <person name="Vitale D."/>
            <person name="Mannhaupt G."/>
            <person name="Haase D."/>
            <person name="Schoof H."/>
            <person name="Rudd S."/>
            <person name="Zaccaria P."/>
            <person name="Mewes H.-W."/>
            <person name="Mayer K.F.X."/>
            <person name="Kaul S."/>
            <person name="Town C.D."/>
            <person name="Koo H.L."/>
            <person name="Tallon L.J."/>
            <person name="Jenkins J."/>
            <person name="Rooney T."/>
            <person name="Rizzo M."/>
            <person name="Walts A."/>
            <person name="Utterback T."/>
            <person name="Fujii C.Y."/>
            <person name="Shea T.P."/>
            <person name="Creasy T.H."/>
            <person name="Haas B."/>
            <person name="Maiti R."/>
            <person name="Wu D."/>
            <person name="Peterson J."/>
            <person name="Van Aken S."/>
            <person name="Pai G."/>
            <person name="Militscher J."/>
            <person name="Sellers P."/>
            <person name="Gill J.E."/>
            <person name="Feldblyum T.V."/>
            <person name="Preuss D."/>
            <person name="Lin X."/>
            <person name="Nierman W.C."/>
            <person name="Salzberg S.L."/>
            <person name="White O."/>
            <person name="Venter J.C."/>
            <person name="Fraser C.M."/>
            <person name="Kaneko T."/>
            <person name="Nakamura Y."/>
            <person name="Sato S."/>
            <person name="Kato T."/>
            <person name="Asamizu E."/>
            <person name="Sasamoto S."/>
            <person name="Kimura T."/>
            <person name="Idesawa K."/>
            <person name="Kawashima K."/>
            <person name="Kishida Y."/>
            <person name="Kiyokawa C."/>
            <person name="Kohara M."/>
            <person name="Matsumoto M."/>
            <person name="Matsuno A."/>
            <person name="Muraki A."/>
            <person name="Nakayama S."/>
            <person name="Nakazaki N."/>
            <person name="Shinpo S."/>
            <person name="Takeuchi C."/>
            <person name="Wada T."/>
            <person name="Watanabe A."/>
            <person name="Yamada M."/>
            <person name="Yasuda M."/>
            <person name="Tabata S."/>
        </authorList>
    </citation>
    <scope>NUCLEOTIDE SEQUENCE [LARGE SCALE GENOMIC DNA]</scope>
    <source>
        <strain>cv. Columbia</strain>
    </source>
</reference>
<reference key="2">
    <citation type="journal article" date="2017" name="Plant J.">
        <title>Araport11: a complete reannotation of the Arabidopsis thaliana reference genome.</title>
        <authorList>
            <person name="Cheng C.Y."/>
            <person name="Krishnakumar V."/>
            <person name="Chan A.P."/>
            <person name="Thibaud-Nissen F."/>
            <person name="Schobel S."/>
            <person name="Town C.D."/>
        </authorList>
    </citation>
    <scope>GENOME REANNOTATION</scope>
    <source>
        <strain>cv. Columbia</strain>
    </source>
</reference>
<reference key="3">
    <citation type="journal article" date="2010" name="Plant Physiol.">
        <title>RTM3, which controls long-distance movement of potyviruses, is a member of a new plant gene family encoding a meprin and TRAF homology domain-containing protein.</title>
        <authorList>
            <person name="Cosson P."/>
            <person name="Sofer L."/>
            <person name="Le Q.H."/>
            <person name="Leger V."/>
            <person name="Schurdi-Levraud V."/>
            <person name="Whitham S.A."/>
            <person name="Yamamoto M.L."/>
            <person name="Gopalan S."/>
            <person name="Le Gall O."/>
            <person name="Candresse T."/>
            <person name="Carrington J.C."/>
            <person name="Revers F."/>
        </authorList>
    </citation>
    <scope>GENE FAMILY</scope>
</reference>
<protein>
    <recommendedName>
        <fullName>MATH domain and coiled-coil domain-containing protein At3g58440</fullName>
    </recommendedName>
    <alternativeName>
        <fullName>RTM3-like protein At3g58440</fullName>
    </alternativeName>
</protein>
<gene>
    <name type="ordered locus">At3g58440</name>
    <name type="ORF">F14P22.30</name>
</gene>
<feature type="chain" id="PRO_0000429308" description="MATH domain and coiled-coil domain-containing protein At3g58440">
    <location>
        <begin position="1"/>
        <end position="358"/>
    </location>
</feature>
<feature type="domain" description="MATH" evidence="2">
    <location>
        <begin position="8"/>
        <end position="131"/>
    </location>
</feature>
<feature type="coiled-coil region" evidence="1">
    <location>
        <begin position="250"/>
        <end position="309"/>
    </location>
</feature>
<sequence length="358" mass="40770">MSLDLKMQDKFTWVLEKFSSLKDQCYSPVFTVAGCNWRLLSFLKGAKNDRYFSVYLDLEPGSLPPGWRREVKFSITLDNVCPNTDRVLGGPCFFDAKSNIWGFQDFLLLEKLVNIAEGFLVNDRLTIVAEVDVLPSITRLHLVLEDASRGRDPNTVACVTETCDYVLMEIQSDKETVDINGFVVVSSKAESVRRILERHPDISVEFRGKNQQLRNACMNFLLSLIETMCQSLEELSNEDLVEADVALTYLRDAGFKVDWLEKKLDQLKEKKEEEMSGLARLHEIEERLQKLKLLFVDLESQLQKEKVEALVARAPLSFNDGVCRFSGFCGFVGESLFSYAWKQGPSLYSLSFMSNGTE</sequence>
<accession>Q9M2H2</accession>
<comment type="sequence caution" evidence="3">
    <conflict type="erroneous gene model prediction">
        <sequence resource="EMBL-CDS" id="AEE79781"/>
    </conflict>
</comment>
<comment type="sequence caution" evidence="3">
    <conflict type="erroneous gene model prediction">
        <sequence resource="EMBL-CDS" id="CAB68182"/>
    </conflict>
</comment>
<keyword id="KW-0175">Coiled coil</keyword>
<keyword id="KW-1185">Reference proteome</keyword>
<evidence type="ECO:0000255" key="1"/>
<evidence type="ECO:0000255" key="2">
    <source>
        <dbReference type="PROSITE-ProRule" id="PRU00129"/>
    </source>
</evidence>
<evidence type="ECO:0000305" key="3"/>
<name>MCC31_ARATH</name>
<organism>
    <name type="scientific">Arabidopsis thaliana</name>
    <name type="common">Mouse-ear cress</name>
    <dbReference type="NCBI Taxonomy" id="3702"/>
    <lineage>
        <taxon>Eukaryota</taxon>
        <taxon>Viridiplantae</taxon>
        <taxon>Streptophyta</taxon>
        <taxon>Embryophyta</taxon>
        <taxon>Tracheophyta</taxon>
        <taxon>Spermatophyta</taxon>
        <taxon>Magnoliopsida</taxon>
        <taxon>eudicotyledons</taxon>
        <taxon>Gunneridae</taxon>
        <taxon>Pentapetalae</taxon>
        <taxon>rosids</taxon>
        <taxon>malvids</taxon>
        <taxon>Brassicales</taxon>
        <taxon>Brassicaceae</taxon>
        <taxon>Camelineae</taxon>
        <taxon>Arabidopsis</taxon>
    </lineage>
</organism>